<organism>
    <name type="scientific">Human papillomavirus type 32</name>
    <dbReference type="NCBI Taxonomy" id="333763"/>
    <lineage>
        <taxon>Viruses</taxon>
        <taxon>Monodnaviria</taxon>
        <taxon>Shotokuvirae</taxon>
        <taxon>Cossaviricota</taxon>
        <taxon>Papovaviricetes</taxon>
        <taxon>Zurhausenvirales</taxon>
        <taxon>Papillomaviridae</taxon>
        <taxon>Firstpapillomavirinae</taxon>
        <taxon>Alphapapillomavirus</taxon>
        <taxon>Alphapapillomavirus 1</taxon>
    </lineage>
</organism>
<gene>
    <name evidence="1" type="primary">E1</name>
</gene>
<organismHost>
    <name type="scientific">Homo sapiens</name>
    <name type="common">Human</name>
    <dbReference type="NCBI Taxonomy" id="9606"/>
</organismHost>
<comment type="function">
    <text evidence="1">ATP-dependent DNA 3'-5' helicase required for initiation of viral DNA replication. It forms a complex with the viral E2 protein. The E1-E2 complex binds to the replication origin which contains binding sites for both proteins. During the initial step, a dimer of E1 interacts with a dimer of protein E2 leading to a complex that binds the viral origin of replication with high specificity. Then, a second dimer of E1 displaces the E2 dimer in an ATP-dependent manner to form the E1 tetramer. Following this, two E1 monomers are added to each half of the site, which results in the formation of two E1 trimers on the viral ori. Subsequently, two hexamers will be created. The double hexamer acts as a bi-directional helicase machinery and unwinds the viral DNA and then recruits the host DNA polymerase to start replication.</text>
</comment>
<comment type="catalytic activity">
    <reaction evidence="1">
        <text>Couples ATP hydrolysis with the unwinding of duplex DNA by translocating in the 3'-5' direction.</text>
        <dbReference type="EC" id="5.6.2.4"/>
    </reaction>
</comment>
<comment type="catalytic activity">
    <reaction evidence="1">
        <text>ATP + H2O = ADP + phosphate + H(+)</text>
        <dbReference type="Rhea" id="RHEA:13065"/>
        <dbReference type="ChEBI" id="CHEBI:15377"/>
        <dbReference type="ChEBI" id="CHEBI:15378"/>
        <dbReference type="ChEBI" id="CHEBI:30616"/>
        <dbReference type="ChEBI" id="CHEBI:43474"/>
        <dbReference type="ChEBI" id="CHEBI:456216"/>
        <dbReference type="EC" id="5.6.2.4"/>
    </reaction>
</comment>
<comment type="subunit">
    <text evidence="1">Can form hexamers. Interacts with E2 protein; this interaction increases E1 DNA binding specificity. Interacts with host DNA polymerase subunit POLA2. Interacts with host single stranded DNA-binding protein RPA1. Interacts with host TOP1; this interaction stimulates the enzymatic activity of TOP1.</text>
</comment>
<comment type="subcellular location">
    <subcellularLocation>
        <location evidence="1">Host nucleus</location>
    </subcellularLocation>
</comment>
<comment type="PTM">
    <text evidence="1">Phosphorylated.</text>
</comment>
<comment type="PTM">
    <text evidence="1">Sumoylated.</text>
</comment>
<comment type="similarity">
    <text evidence="1">Belongs to the papillomaviridae E1 protein family.</text>
</comment>
<dbReference type="EC" id="5.6.2.4" evidence="1"/>
<dbReference type="EMBL" id="X74475">
    <property type="protein sequence ID" value="CAA52551.1"/>
    <property type="molecule type" value="Genomic_DNA"/>
</dbReference>
<dbReference type="PIR" id="S36511">
    <property type="entry name" value="S36511"/>
</dbReference>
<dbReference type="RefSeq" id="NP_041803.1">
    <property type="nucleotide sequence ID" value="NC_001586.1"/>
</dbReference>
<dbReference type="SMR" id="P36724"/>
<dbReference type="GeneID" id="1489422"/>
<dbReference type="KEGG" id="vg:1489422"/>
<dbReference type="OrthoDB" id="4795at10239"/>
<dbReference type="Proteomes" id="UP000009117">
    <property type="component" value="Genome"/>
</dbReference>
<dbReference type="GO" id="GO:0042025">
    <property type="term" value="C:host cell nucleus"/>
    <property type="evidence" value="ECO:0007669"/>
    <property type="project" value="UniProtKB-SubCell"/>
</dbReference>
<dbReference type="GO" id="GO:0005524">
    <property type="term" value="F:ATP binding"/>
    <property type="evidence" value="ECO:0007669"/>
    <property type="project" value="UniProtKB-UniRule"/>
</dbReference>
<dbReference type="GO" id="GO:0016887">
    <property type="term" value="F:ATP hydrolysis activity"/>
    <property type="evidence" value="ECO:0007669"/>
    <property type="project" value="RHEA"/>
</dbReference>
<dbReference type="GO" id="GO:0003677">
    <property type="term" value="F:DNA binding"/>
    <property type="evidence" value="ECO:0007669"/>
    <property type="project" value="UniProtKB-UniRule"/>
</dbReference>
<dbReference type="GO" id="GO:0003678">
    <property type="term" value="F:DNA helicase activity"/>
    <property type="evidence" value="ECO:0007669"/>
    <property type="project" value="UniProtKB-UniRule"/>
</dbReference>
<dbReference type="GO" id="GO:0006260">
    <property type="term" value="P:DNA replication"/>
    <property type="evidence" value="ECO:0007669"/>
    <property type="project" value="UniProtKB-UniRule"/>
</dbReference>
<dbReference type="Gene3D" id="3.40.1310.10">
    <property type="match status" value="1"/>
</dbReference>
<dbReference type="Gene3D" id="3.40.50.300">
    <property type="entry name" value="P-loop containing nucleotide triphosphate hydrolases"/>
    <property type="match status" value="1"/>
</dbReference>
<dbReference type="Gene3D" id="1.10.10.510">
    <property type="entry name" value="Zinc finger, large T-antigen D1 domain"/>
    <property type="match status" value="1"/>
</dbReference>
<dbReference type="HAMAP" id="MF_04000">
    <property type="entry name" value="PPV_E1"/>
    <property type="match status" value="1"/>
</dbReference>
<dbReference type="InterPro" id="IPR014015">
    <property type="entry name" value="Helicase_SF3_DNA-vir"/>
</dbReference>
<dbReference type="InterPro" id="IPR027417">
    <property type="entry name" value="P-loop_NTPase"/>
</dbReference>
<dbReference type="InterPro" id="IPR001177">
    <property type="entry name" value="PPV_DNA_helicase_E1_C"/>
</dbReference>
<dbReference type="InterPro" id="IPR014000">
    <property type="entry name" value="PPV_DNA_helicase_E1_N"/>
</dbReference>
<dbReference type="InterPro" id="IPR046832">
    <property type="entry name" value="PPV_E1_DBD"/>
</dbReference>
<dbReference type="InterPro" id="IPR046935">
    <property type="entry name" value="PPV_E1_DBD_sf"/>
</dbReference>
<dbReference type="InterPro" id="IPR016393">
    <property type="entry name" value="Rep_E1_papillomaV"/>
</dbReference>
<dbReference type="InterPro" id="IPR037102">
    <property type="entry name" value="Znf_lg_T-Ag_D1_dom_sf"/>
</dbReference>
<dbReference type="Pfam" id="PF00519">
    <property type="entry name" value="PPV_E1_C"/>
    <property type="match status" value="1"/>
</dbReference>
<dbReference type="Pfam" id="PF20450">
    <property type="entry name" value="PPV_E1_DBD"/>
    <property type="match status" value="1"/>
</dbReference>
<dbReference type="Pfam" id="PF00524">
    <property type="entry name" value="PPV_E1_N"/>
    <property type="match status" value="1"/>
</dbReference>
<dbReference type="PIRSF" id="PIRSF003383">
    <property type="entry name" value="Rep_E1_papillomaV"/>
    <property type="match status" value="1"/>
</dbReference>
<dbReference type="SUPFAM" id="SSF55464">
    <property type="entry name" value="Origin of replication-binding domain, RBD-like"/>
    <property type="match status" value="1"/>
</dbReference>
<dbReference type="SUPFAM" id="SSF52540">
    <property type="entry name" value="P-loop containing nucleoside triphosphate hydrolases"/>
    <property type="match status" value="1"/>
</dbReference>
<dbReference type="PROSITE" id="PS51206">
    <property type="entry name" value="SF3_HELICASE_1"/>
    <property type="match status" value="1"/>
</dbReference>
<accession>P36724</accession>
<keyword id="KW-0067">ATP-binding</keyword>
<keyword id="KW-0235">DNA replication</keyword>
<keyword id="KW-0238">DNA-binding</keyword>
<keyword id="KW-0244">Early protein</keyword>
<keyword id="KW-0347">Helicase</keyword>
<keyword id="KW-1048">Host nucleus</keyword>
<keyword id="KW-0378">Hydrolase</keyword>
<keyword id="KW-0413">Isomerase</keyword>
<keyword id="KW-1017">Isopeptide bond</keyword>
<keyword id="KW-0547">Nucleotide-binding</keyword>
<keyword id="KW-0597">Phosphoprotein</keyword>
<keyword id="KW-1185">Reference proteome</keyword>
<keyword id="KW-0832">Ubl conjugation</keyword>
<protein>
    <recommendedName>
        <fullName evidence="1">Replication protein E1</fullName>
        <ecNumber evidence="1">5.6.2.4</ecNumber>
    </recommendedName>
    <alternativeName>
        <fullName evidence="1">ATP-dependent helicase E1</fullName>
    </alternativeName>
    <alternativeName>
        <fullName evidence="1">DNA 3'-5' helicase E1</fullName>
    </alternativeName>
</protein>
<sequence length="642" mass="72303">MADDTGTEEGLGCSGWFSVEAIVERTTENTISDDEDENVEDSGLDLVDFVDDSRIIPTNQLKAQALLNRQQAHADKEAVQALKRKLLGSPYESPASDLQESINKELSPRLGGLQLCRGSQGAKRRLFQSLENRDSGYGYSEVEIRQEQVENGHGAPDGSMGNGGGMGSVHGVQENQEIGTNTPTTRVVELLKCKNLQATLLGKFKELFGLSFGDLVRQFKSDKSSCTDWVVAAFGVHHSIAEGFNTLIKAEALYTHIQWLTCTWGMVLLMLIRFKCGKNRTTVSKGMCKLLNIPANQLLIEPPRLQSVAAAIYWFRAGISNASVVTGETPEWIQRQTIVEHCFADTQFNLTEMVQWAYDNDLTEDSDIAYEYAQRADTDSNAAAFLKSNCQAKYVKDCGIMCRHYKKAQMKRMSMPQWIKHRSERTGDNGDWRPIVKFIRYQGIDFLTFMSAFKKFLHNIPKKSCLVLIGPPNTGKSQFGMSLVKFLAGTVISFVNSHSHFWLQPLDSAKIAMLDDATPPCWTYLDTYLRNLLDGNPCSIDRKHKALTVVKCPPLIITSNTDIRTEDRWKYLYSRISLFEFPNPFPLDKNGNPVYVLNDENWKSFFQRLWSSLEFQESEDEEENGDTGQTFRCVPGTVVRTV</sequence>
<evidence type="ECO:0000255" key="1">
    <source>
        <dbReference type="HAMAP-Rule" id="MF_04000"/>
    </source>
</evidence>
<name>VE1_HPV32</name>
<feature type="chain" id="PRO_0000133130" description="Replication protein E1">
    <location>
        <begin position="1"/>
        <end position="642"/>
    </location>
</feature>
<feature type="domain" description="SF3 helicase" evidence="1">
    <location>
        <begin position="444"/>
        <end position="594"/>
    </location>
</feature>
<feature type="region of interest" description="DNA-binding region" evidence="1">
    <location>
        <begin position="179"/>
        <end position="345"/>
    </location>
</feature>
<feature type="short sequence motif" description="Nuclear localization signal" evidence="1">
    <location>
        <begin position="83"/>
        <end position="85"/>
    </location>
</feature>
<feature type="short sequence motif" description="Nuclear export signal" evidence="1">
    <location>
        <begin position="106"/>
        <end position="115"/>
    </location>
</feature>
<feature type="binding site" evidence="1">
    <location>
        <begin position="470"/>
        <end position="477"/>
    </location>
    <ligand>
        <name>ATP</name>
        <dbReference type="ChEBI" id="CHEBI:30616"/>
    </ligand>
</feature>
<feature type="modified residue" description="Phosphoserine; by host" evidence="1">
    <location>
        <position position="89"/>
    </location>
</feature>
<feature type="modified residue" description="Phosphoserine; by host" evidence="1">
    <location>
        <position position="93"/>
    </location>
</feature>
<feature type="modified residue" description="Phosphoserine; by host" evidence="1">
    <location>
        <position position="107"/>
    </location>
</feature>
<feature type="cross-link" description="Glycyl lysine isopeptide (Lys-Gly) (interchain with G-Cter in SUMO)" evidence="1">
    <location>
        <position position="551"/>
    </location>
</feature>
<reference key="1">
    <citation type="journal article" date="1994" name="Curr. Top. Microbiol. Immunol.">
        <title>Primer-directed sequencing of human papillomavirus types.</title>
        <authorList>
            <person name="Delius H."/>
            <person name="Hofmann B."/>
        </authorList>
    </citation>
    <scope>NUCLEOTIDE SEQUENCE [GENOMIC DNA]</scope>
</reference>
<proteinExistence type="inferred from homology"/>